<keyword id="KW-0067">ATP-binding</keyword>
<keyword id="KW-0378">Hydrolase</keyword>
<keyword id="KW-0472">Membrane</keyword>
<keyword id="KW-0479">Metal-binding</keyword>
<keyword id="KW-0482">Metalloprotease</keyword>
<keyword id="KW-0496">Mitochondrion</keyword>
<keyword id="KW-0999">Mitochondrion inner membrane</keyword>
<keyword id="KW-0547">Nucleotide-binding</keyword>
<keyword id="KW-0645">Protease</keyword>
<keyword id="KW-1185">Reference proteome</keyword>
<keyword id="KW-0809">Transit peptide</keyword>
<keyword id="KW-0812">Transmembrane</keyword>
<keyword id="KW-1133">Transmembrane helix</keyword>
<keyword id="KW-0862">Zinc</keyword>
<feature type="transit peptide" description="Mitochondrion" evidence="6">
    <location>
        <begin position="1"/>
        <end position="53"/>
    </location>
</feature>
<feature type="chain" id="PRO_0000341330" description="ATP-dependent zinc metalloprotease FTSH 4, mitochondrial">
    <location>
        <begin position="54"/>
        <end position="717"/>
    </location>
</feature>
<feature type="transmembrane region" description="Helical" evidence="2">
    <location>
        <begin position="181"/>
        <end position="201"/>
    </location>
</feature>
<feature type="active site" evidence="1">
    <location>
        <position position="487"/>
    </location>
</feature>
<feature type="binding site" evidence="2">
    <location>
        <begin position="267"/>
        <end position="274"/>
    </location>
    <ligand>
        <name>ATP</name>
        <dbReference type="ChEBI" id="CHEBI:30616"/>
    </ligand>
</feature>
<feature type="binding site" evidence="1">
    <location>
        <position position="486"/>
    </location>
    <ligand>
        <name>Zn(2+)</name>
        <dbReference type="ChEBI" id="CHEBI:29105"/>
        <note>catalytic</note>
    </ligand>
</feature>
<feature type="binding site" evidence="1">
    <location>
        <position position="490"/>
    </location>
    <ligand>
        <name>Zn(2+)</name>
        <dbReference type="ChEBI" id="CHEBI:29105"/>
        <note>catalytic</note>
    </ligand>
</feature>
<feature type="binding site" evidence="1">
    <location>
        <position position="564"/>
    </location>
    <ligand>
        <name>Zn(2+)</name>
        <dbReference type="ChEBI" id="CHEBI:29105"/>
        <note>catalytic</note>
    </ligand>
</feature>
<comment type="function">
    <text evidence="7">Probable ATP-dependent zinc metallopeptidase. Involved in the assembly and/or stability of the complex V of the mitochondrial oxidative phosphorylation system.</text>
</comment>
<comment type="cofactor">
    <cofactor evidence="1">
        <name>Zn(2+)</name>
        <dbReference type="ChEBI" id="CHEBI:29105"/>
    </cofactor>
    <text evidence="1">Binds 1 zinc ion per subunit.</text>
</comment>
<comment type="subunit">
    <text evidence="5">Homooligomer. The complex formed by FTSH4 does not contain FTSH11.</text>
</comment>
<comment type="subcellular location">
    <subcellularLocation>
        <location evidence="3 5 7 9">Mitochondrion inner membrane</location>
        <topology evidence="3 5 7">Single-pass membrane protein</topology>
        <orientation evidence="3 5 7">Intermembrane side</orientation>
    </subcellularLocation>
</comment>
<comment type="induction">
    <text evidence="4">By high light.</text>
</comment>
<comment type="miscellaneous">
    <text>In contrast to fungi and metazoa, plant mitochondria have more than one i-AAA-like complexes.</text>
</comment>
<comment type="similarity">
    <text evidence="8">In the N-terminal section; belongs to the AAA ATPase family.</text>
</comment>
<comment type="similarity">
    <text evidence="8">In the C-terminal section; belongs to the peptidase M41 family.</text>
</comment>
<proteinExistence type="evidence at protein level"/>
<accession>O80983</accession>
<accession>Q56ZW8</accession>
<organism>
    <name type="scientific">Arabidopsis thaliana</name>
    <name type="common">Mouse-ear cress</name>
    <dbReference type="NCBI Taxonomy" id="3702"/>
    <lineage>
        <taxon>Eukaryota</taxon>
        <taxon>Viridiplantae</taxon>
        <taxon>Streptophyta</taxon>
        <taxon>Embryophyta</taxon>
        <taxon>Tracheophyta</taxon>
        <taxon>Spermatophyta</taxon>
        <taxon>Magnoliopsida</taxon>
        <taxon>eudicotyledons</taxon>
        <taxon>Gunneridae</taxon>
        <taxon>Pentapetalae</taxon>
        <taxon>rosids</taxon>
        <taxon>malvids</taxon>
        <taxon>Brassicales</taxon>
        <taxon>Brassicaceae</taxon>
        <taxon>Camelineae</taxon>
        <taxon>Arabidopsis</taxon>
    </lineage>
</organism>
<reference key="1">
    <citation type="journal article" date="1999" name="Nature">
        <title>Sequence and analysis of chromosome 2 of the plant Arabidopsis thaliana.</title>
        <authorList>
            <person name="Lin X."/>
            <person name="Kaul S."/>
            <person name="Rounsley S.D."/>
            <person name="Shea T.P."/>
            <person name="Benito M.-I."/>
            <person name="Town C.D."/>
            <person name="Fujii C.Y."/>
            <person name="Mason T.M."/>
            <person name="Bowman C.L."/>
            <person name="Barnstead M.E."/>
            <person name="Feldblyum T.V."/>
            <person name="Buell C.R."/>
            <person name="Ketchum K.A."/>
            <person name="Lee J.J."/>
            <person name="Ronning C.M."/>
            <person name="Koo H.L."/>
            <person name="Moffat K.S."/>
            <person name="Cronin L.A."/>
            <person name="Shen M."/>
            <person name="Pai G."/>
            <person name="Van Aken S."/>
            <person name="Umayam L."/>
            <person name="Tallon L.J."/>
            <person name="Gill J.E."/>
            <person name="Adams M.D."/>
            <person name="Carrera A.J."/>
            <person name="Creasy T.H."/>
            <person name="Goodman H.M."/>
            <person name="Somerville C.R."/>
            <person name="Copenhaver G.P."/>
            <person name="Preuss D."/>
            <person name="Nierman W.C."/>
            <person name="White O."/>
            <person name="Eisen J.A."/>
            <person name="Salzberg S.L."/>
            <person name="Fraser C.M."/>
            <person name="Venter J.C."/>
        </authorList>
    </citation>
    <scope>NUCLEOTIDE SEQUENCE [LARGE SCALE GENOMIC DNA]</scope>
    <source>
        <strain>cv. Columbia</strain>
    </source>
</reference>
<reference key="2">
    <citation type="journal article" date="2017" name="Plant J.">
        <title>Araport11: a complete reannotation of the Arabidopsis thaliana reference genome.</title>
        <authorList>
            <person name="Cheng C.Y."/>
            <person name="Krishnakumar V."/>
            <person name="Chan A.P."/>
            <person name="Thibaud-Nissen F."/>
            <person name="Schobel S."/>
            <person name="Town C.D."/>
        </authorList>
    </citation>
    <scope>GENOME REANNOTATION</scope>
    <source>
        <strain>cv. Columbia</strain>
    </source>
</reference>
<reference key="3">
    <citation type="submission" date="2005-03" db="EMBL/GenBank/DDBJ databases">
        <title>Large-scale analysis of RIKEN Arabidopsis full-length (RAFL) cDNAs.</title>
        <authorList>
            <person name="Totoki Y."/>
            <person name="Seki M."/>
            <person name="Ishida J."/>
            <person name="Nakajima M."/>
            <person name="Enju A."/>
            <person name="Kamiya A."/>
            <person name="Narusaka M."/>
            <person name="Shin-i T."/>
            <person name="Nakagawa M."/>
            <person name="Sakamoto N."/>
            <person name="Oishi K."/>
            <person name="Kohara Y."/>
            <person name="Kobayashi M."/>
            <person name="Toyoda A."/>
            <person name="Sakaki Y."/>
            <person name="Sakurai T."/>
            <person name="Iida K."/>
            <person name="Akiyama K."/>
            <person name="Satou M."/>
            <person name="Toyoda T."/>
            <person name="Konagaya A."/>
            <person name="Carninci P."/>
            <person name="Kawai J."/>
            <person name="Hayashizaki Y."/>
            <person name="Shinozaki K."/>
        </authorList>
    </citation>
    <scope>NUCLEOTIDE SEQUENCE [LARGE SCALE MRNA] OF 666-717</scope>
    <source>
        <strain>cv. Columbia</strain>
    </source>
</reference>
<reference key="4">
    <citation type="journal article" date="2001" name="Plant Physiol.">
        <title>Chloroplast and mitochondrial proteases in Arabidopsis. A proposed nomenclature.</title>
        <authorList>
            <person name="Adam Z."/>
            <person name="Adamska I."/>
            <person name="Nakabayashi K."/>
            <person name="Ostersetzer O."/>
            <person name="Haussuhl K."/>
            <person name="Manuell A."/>
            <person name="Zheng B."/>
            <person name="Vallon O."/>
            <person name="Rodermel S.R."/>
            <person name="Shinozaki K."/>
            <person name="Clarke A.K."/>
        </authorList>
    </citation>
    <scope>GENE FAMILY</scope>
    <scope>NOMENCLATURE</scope>
</reference>
<reference key="5">
    <citation type="journal article" date="2003" name="Plant Cell">
        <title>Coordinated regulation and complex formation of yellow variegated1 and yellow variegated2, chloroplastic FtsH metalloproteases involved in the repair cycle of photosystem II in Arabidopsis thylakoid membranes.</title>
        <authorList>
            <person name="Sakamoto W."/>
            <person name="Zaltsman A."/>
            <person name="Adam Z."/>
            <person name="Takahashi Y."/>
        </authorList>
    </citation>
    <scope>SUBCELLULAR LOCATION</scope>
</reference>
<reference key="6">
    <citation type="journal article" date="2004" name="Plant Physiol.">
        <title>Expression in multigene families. Analysis of chloroplast and mitochondrial proteases.</title>
        <authorList>
            <person name="Sinvany-Villalobo G."/>
            <person name="Davydov O."/>
            <person name="Ben-Ari G."/>
            <person name="Zaltsman A."/>
            <person name="Raskind A."/>
            <person name="Adam Z."/>
        </authorList>
    </citation>
    <scope>INDUCTION BY HIGH LIGHT</scope>
</reference>
<reference key="7">
    <citation type="journal article" date="2004" name="Plant J.">
        <title>The Arabidopsis FtsH metalloprotease gene family: interchangeability of subunits in chloroplast oligomeric complexes.</title>
        <authorList>
            <person name="Yu F."/>
            <person name="Park S."/>
            <person name="Rodermel S.R."/>
        </authorList>
    </citation>
    <scope>GENE FAMILY</scope>
    <scope>NOMENCLATURE</scope>
</reference>
<reference key="8">
    <citation type="journal article" date="2005" name="Plant Mol. Biol.">
        <title>Plant mitochondria contain at least two i-AAA-like complexes.</title>
        <authorList>
            <person name="Urantowka A."/>
            <person name="Knorpp C."/>
            <person name="Olczak T."/>
            <person name="Kolodziejczak M."/>
            <person name="Janska H."/>
        </authorList>
    </citation>
    <scope>SUBUNIT</scope>
    <scope>SUBCELLULAR LOCATION</scope>
</reference>
<reference key="9">
    <citation type="journal article" date="2007" name="Physiol. Plantarum">
        <title>The significance of Arabidopsis AAA proteases for activity and assembly/stability of mitochondrial OXPHOS complexes.</title>
        <authorList>
            <person name="Kolodziejczak M."/>
            <person name="Gibala M."/>
            <person name="Urantowka A."/>
            <person name="Janska H."/>
        </authorList>
    </citation>
    <scope>FUNCTION</scope>
    <scope>SUBCELLULAR LOCATION</scope>
</reference>
<reference key="10">
    <citation type="journal article" date="2015" name="J. Exp. Bot.">
        <title>Identification of cleavage sites and substrate proteins for two mitochondrial intermediate peptidases in Arabidopsis thaliana.</title>
        <authorList>
            <person name="Carrie C."/>
            <person name="Venne A.S."/>
            <person name="Zahedi R.P."/>
            <person name="Soll J."/>
        </authorList>
    </citation>
    <scope>IDENTIFICATION BY MASS SPECTROMETRY</scope>
    <scope>CLEAVAGE OF TRANSIT PEPTIDE AFTER GLN-53</scope>
</reference>
<sequence>MAWRRIITKVSSHERELSSLRSLLVRAYSSFPRVGVTGAVGGGGASLPRTRFQSSYVGSFARRVRDREEVNEVAHLRELIRRNDPEAVIRMFESQPSLHANASALSEYIKALVKVDRLDQSELVRTLQRGIAGVAREEETFGGLGAFRNVGKPTKDGVLGTASAPIHTISTERTHFKEQLWSTIRTIGVGFLLISGIGALIEDRGIGKGLGLHEEVQPSMDSSTKFSDVKGVDEAKAELEEIVHYLRDPKRFTRLGGKLPKGVLLVGPPGTGKTMLARAIAGEAGVPFFSCSGSEFEEMFVGVGARRVRDLFSAAKKCSPCIIFIDEIDAIGGSRNPKDQQYMKMTLNQMLVELDGFKQNEGIIVVAATNFPESLDKALVRPGRFDRHIVVPNPDVEGRRQILESHMSKVLKAEDVDLMIIARGTPGFSGADLANLVNVAALKAAMDGSKDVTMSDLEFAKDRIMMGSERKSAVISDESRKLTAFHEGGHALVAIHTEGALPVHKATIVPRGMALGMVSQLPDKDETSISRKQMLARLDVCMGGRVAEELIFGESEVTSGASSDLEQATKLARAMVTKFGMSKEVGLVAHNYDDNGKSMSTETRLLIESEVKQLLEKAYNNAKTILTVYNKELHALANALLQHETLSGKQIKELLTDLNSPLLQKRQEVVTKQSNPVPPSTPSSASSAAAAAAAAAAAAAAAAATAATKGKDMAPVS</sequence>
<evidence type="ECO:0000250" key="1"/>
<evidence type="ECO:0000255" key="2"/>
<evidence type="ECO:0000269" key="3">
    <source>
    </source>
</evidence>
<evidence type="ECO:0000269" key="4">
    <source>
    </source>
</evidence>
<evidence type="ECO:0000269" key="5">
    <source>
    </source>
</evidence>
<evidence type="ECO:0000269" key="6">
    <source>
    </source>
</evidence>
<evidence type="ECO:0000269" key="7">
    <source ref="9"/>
</evidence>
<evidence type="ECO:0000305" key="8"/>
<evidence type="ECO:0000305" key="9">
    <source>
    </source>
</evidence>
<gene>
    <name type="primary">FTSH4</name>
    <name type="ordered locus">At2g26140</name>
    <name type="ORF">T19L18.5</name>
</gene>
<name>FTSH4_ARATH</name>
<dbReference type="EC" id="3.4.24.-"/>
<dbReference type="EMBL" id="AC004747">
    <property type="protein sequence ID" value="AAC31223.2"/>
    <property type="molecule type" value="Genomic_DNA"/>
</dbReference>
<dbReference type="EMBL" id="CP002685">
    <property type="protein sequence ID" value="AEC07799.1"/>
    <property type="molecule type" value="Genomic_DNA"/>
</dbReference>
<dbReference type="EMBL" id="AK220842">
    <property type="protein sequence ID" value="BAD94171.1"/>
    <property type="molecule type" value="mRNA"/>
</dbReference>
<dbReference type="PIR" id="T02610">
    <property type="entry name" value="T02610"/>
</dbReference>
<dbReference type="RefSeq" id="NP_565616.1">
    <property type="nucleotide sequence ID" value="NM_128172.4"/>
</dbReference>
<dbReference type="SMR" id="O80983"/>
<dbReference type="BioGRID" id="2506">
    <property type="interactions" value="2"/>
</dbReference>
<dbReference type="FunCoup" id="O80983">
    <property type="interactions" value="4813"/>
</dbReference>
<dbReference type="STRING" id="3702.O80983"/>
<dbReference type="MEROPS" id="M41.018"/>
<dbReference type="GlyGen" id="O80983">
    <property type="glycosylation" value="1 site"/>
</dbReference>
<dbReference type="SwissPalm" id="O80983"/>
<dbReference type="PaxDb" id="3702-AT2G26140.1"/>
<dbReference type="ProteomicsDB" id="228957"/>
<dbReference type="EnsemblPlants" id="AT2G26140.1">
    <property type="protein sequence ID" value="AT2G26140.1"/>
    <property type="gene ID" value="AT2G26140"/>
</dbReference>
<dbReference type="GeneID" id="817154"/>
<dbReference type="Gramene" id="AT2G26140.1">
    <property type="protein sequence ID" value="AT2G26140.1"/>
    <property type="gene ID" value="AT2G26140"/>
</dbReference>
<dbReference type="KEGG" id="ath:AT2G26140"/>
<dbReference type="Araport" id="AT2G26140"/>
<dbReference type="TAIR" id="AT2G26140">
    <property type="gene designation" value="FTSH4"/>
</dbReference>
<dbReference type="eggNOG" id="KOG0734">
    <property type="taxonomic scope" value="Eukaryota"/>
</dbReference>
<dbReference type="HOGENOM" id="CLU_000688_9_3_1"/>
<dbReference type="InParanoid" id="O80983"/>
<dbReference type="OMA" id="NKREQAN"/>
<dbReference type="PhylomeDB" id="O80983"/>
<dbReference type="BRENDA" id="3.4.24.B19">
    <property type="organism ID" value="399"/>
</dbReference>
<dbReference type="BRENDA" id="3.4.24.B20">
    <property type="organism ID" value="399"/>
</dbReference>
<dbReference type="CD-CODE" id="4299E36E">
    <property type="entry name" value="Nucleolus"/>
</dbReference>
<dbReference type="PRO" id="PR:O80983"/>
<dbReference type="Proteomes" id="UP000006548">
    <property type="component" value="Chromosome 2"/>
</dbReference>
<dbReference type="ExpressionAtlas" id="O80983">
    <property type="expression patterns" value="baseline and differential"/>
</dbReference>
<dbReference type="GO" id="GO:0005743">
    <property type="term" value="C:mitochondrial inner membrane"/>
    <property type="evidence" value="ECO:0007669"/>
    <property type="project" value="UniProtKB-SubCell"/>
</dbReference>
<dbReference type="GO" id="GO:0005739">
    <property type="term" value="C:mitochondrion"/>
    <property type="evidence" value="ECO:0000314"/>
    <property type="project" value="TAIR"/>
</dbReference>
<dbReference type="GO" id="GO:0005524">
    <property type="term" value="F:ATP binding"/>
    <property type="evidence" value="ECO:0007669"/>
    <property type="project" value="UniProtKB-KW"/>
</dbReference>
<dbReference type="GO" id="GO:0016887">
    <property type="term" value="F:ATP hydrolysis activity"/>
    <property type="evidence" value="ECO:0007669"/>
    <property type="project" value="InterPro"/>
</dbReference>
<dbReference type="GO" id="GO:0004176">
    <property type="term" value="F:ATP-dependent peptidase activity"/>
    <property type="evidence" value="ECO:0007669"/>
    <property type="project" value="InterPro"/>
</dbReference>
<dbReference type="GO" id="GO:0046872">
    <property type="term" value="F:metal ion binding"/>
    <property type="evidence" value="ECO:0007669"/>
    <property type="project" value="UniProtKB-KW"/>
</dbReference>
<dbReference type="GO" id="GO:0004222">
    <property type="term" value="F:metalloendopeptidase activity"/>
    <property type="evidence" value="ECO:0007669"/>
    <property type="project" value="InterPro"/>
</dbReference>
<dbReference type="GO" id="GO:0010073">
    <property type="term" value="P:meristem maintenance"/>
    <property type="evidence" value="ECO:0000315"/>
    <property type="project" value="TAIR"/>
</dbReference>
<dbReference type="GO" id="GO:0006508">
    <property type="term" value="P:proteolysis"/>
    <property type="evidence" value="ECO:0007669"/>
    <property type="project" value="UniProtKB-KW"/>
</dbReference>
<dbReference type="CDD" id="cd19501">
    <property type="entry name" value="RecA-like_FtsH"/>
    <property type="match status" value="1"/>
</dbReference>
<dbReference type="FunFam" id="1.10.8.60:FF:000001">
    <property type="entry name" value="ATP-dependent zinc metalloprotease FtsH"/>
    <property type="match status" value="1"/>
</dbReference>
<dbReference type="FunFam" id="1.20.58.760:FF:000002">
    <property type="entry name" value="ATP-dependent zinc metalloprotease FtsH"/>
    <property type="match status" value="1"/>
</dbReference>
<dbReference type="FunFam" id="3.40.50.300:FF:000175">
    <property type="entry name" value="ATP-dependent zinc metalloprotease FTSH 4"/>
    <property type="match status" value="1"/>
</dbReference>
<dbReference type="Gene3D" id="1.10.8.60">
    <property type="match status" value="1"/>
</dbReference>
<dbReference type="Gene3D" id="3.40.50.300">
    <property type="entry name" value="P-loop containing nucleotide triphosphate hydrolases"/>
    <property type="match status" value="1"/>
</dbReference>
<dbReference type="Gene3D" id="1.20.58.760">
    <property type="entry name" value="Peptidase M41"/>
    <property type="match status" value="1"/>
</dbReference>
<dbReference type="HAMAP" id="MF_01458">
    <property type="entry name" value="FtsH"/>
    <property type="match status" value="1"/>
</dbReference>
<dbReference type="InterPro" id="IPR003593">
    <property type="entry name" value="AAA+_ATPase"/>
</dbReference>
<dbReference type="InterPro" id="IPR041569">
    <property type="entry name" value="AAA_lid_3"/>
</dbReference>
<dbReference type="InterPro" id="IPR003959">
    <property type="entry name" value="ATPase_AAA_core"/>
</dbReference>
<dbReference type="InterPro" id="IPR003960">
    <property type="entry name" value="ATPase_AAA_CS"/>
</dbReference>
<dbReference type="InterPro" id="IPR005936">
    <property type="entry name" value="FtsH"/>
</dbReference>
<dbReference type="InterPro" id="IPR027417">
    <property type="entry name" value="P-loop_NTPase"/>
</dbReference>
<dbReference type="InterPro" id="IPR000642">
    <property type="entry name" value="Peptidase_M41"/>
</dbReference>
<dbReference type="InterPro" id="IPR037219">
    <property type="entry name" value="Peptidase_M41-like"/>
</dbReference>
<dbReference type="NCBIfam" id="TIGR01241">
    <property type="entry name" value="FtsH_fam"/>
    <property type="match status" value="1"/>
</dbReference>
<dbReference type="PANTHER" id="PTHR23076:SF37">
    <property type="entry name" value="ATP-DEPENDENT ZINC METALLOPROTEASE FTSH 4, MITOCHONDRIAL"/>
    <property type="match status" value="1"/>
</dbReference>
<dbReference type="PANTHER" id="PTHR23076">
    <property type="entry name" value="METALLOPROTEASE M41 FTSH"/>
    <property type="match status" value="1"/>
</dbReference>
<dbReference type="Pfam" id="PF00004">
    <property type="entry name" value="AAA"/>
    <property type="match status" value="1"/>
</dbReference>
<dbReference type="Pfam" id="PF17862">
    <property type="entry name" value="AAA_lid_3"/>
    <property type="match status" value="1"/>
</dbReference>
<dbReference type="Pfam" id="PF01434">
    <property type="entry name" value="Peptidase_M41"/>
    <property type="match status" value="1"/>
</dbReference>
<dbReference type="PRINTS" id="PR00830">
    <property type="entry name" value="ENDOLAPTASE"/>
</dbReference>
<dbReference type="SMART" id="SM00382">
    <property type="entry name" value="AAA"/>
    <property type="match status" value="1"/>
</dbReference>
<dbReference type="SUPFAM" id="SSF140990">
    <property type="entry name" value="FtsH protease domain-like"/>
    <property type="match status" value="1"/>
</dbReference>
<dbReference type="SUPFAM" id="SSF52540">
    <property type="entry name" value="P-loop containing nucleoside triphosphate hydrolases"/>
    <property type="match status" value="1"/>
</dbReference>
<dbReference type="PROSITE" id="PS00674">
    <property type="entry name" value="AAA"/>
    <property type="match status" value="1"/>
</dbReference>
<protein>
    <recommendedName>
        <fullName>ATP-dependent zinc metalloprotease FTSH 4, mitochondrial</fullName>
        <shortName>AtFTSH4</shortName>
        <ecNumber>3.4.24.-</ecNumber>
    </recommendedName>
</protein>